<reference key="1">
    <citation type="journal article" date="2008" name="PLoS Genet.">
        <title>Complete genome sequence of the N2-fixing broad host range endophyte Klebsiella pneumoniae 342 and virulence predictions verified in mice.</title>
        <authorList>
            <person name="Fouts D.E."/>
            <person name="Tyler H.L."/>
            <person name="DeBoy R.T."/>
            <person name="Daugherty S."/>
            <person name="Ren Q."/>
            <person name="Badger J.H."/>
            <person name="Durkin A.S."/>
            <person name="Huot H."/>
            <person name="Shrivastava S."/>
            <person name="Kothari S."/>
            <person name="Dodson R.J."/>
            <person name="Mohamoud Y."/>
            <person name="Khouri H."/>
            <person name="Roesch L.F.W."/>
            <person name="Krogfelt K.A."/>
            <person name="Struve C."/>
            <person name="Triplett E.W."/>
            <person name="Methe B.A."/>
        </authorList>
    </citation>
    <scope>NUCLEOTIDE SEQUENCE [LARGE SCALE GENOMIC DNA]</scope>
    <source>
        <strain>342</strain>
    </source>
</reference>
<proteinExistence type="inferred from homology"/>
<organism>
    <name type="scientific">Klebsiella pneumoniae (strain 342)</name>
    <dbReference type="NCBI Taxonomy" id="507522"/>
    <lineage>
        <taxon>Bacteria</taxon>
        <taxon>Pseudomonadati</taxon>
        <taxon>Pseudomonadota</taxon>
        <taxon>Gammaproteobacteria</taxon>
        <taxon>Enterobacterales</taxon>
        <taxon>Enterobacteriaceae</taxon>
        <taxon>Klebsiella/Raoultella group</taxon>
        <taxon>Klebsiella</taxon>
        <taxon>Klebsiella pneumoniae complex</taxon>
    </lineage>
</organism>
<protein>
    <recommendedName>
        <fullName evidence="1">UPF0306 protein KPK_0562</fullName>
    </recommendedName>
</protein>
<name>Y562_KLEP3</name>
<gene>
    <name type="ordered locus">KPK_0562</name>
</gene>
<sequence length="147" mass="16942">METLAAIGRWLSKQHVVTWCVSRDDELWCANAFYVYDQDTVAFYLLSDEHTRHGQMTGERAKVAGTVNGQPKTVALIRGVQFKGEIRRLSGDEEARMRQRYVKRFPVARMLSAPVWEIRPDEIKFTDNTLGFGKKLHWRRDAGAEQA</sequence>
<accession>B5XSY9</accession>
<feature type="chain" id="PRO_1000198360" description="UPF0306 protein KPK_0562">
    <location>
        <begin position="1"/>
        <end position="147"/>
    </location>
</feature>
<dbReference type="EMBL" id="CP000964">
    <property type="protein sequence ID" value="ACI07241.1"/>
    <property type="molecule type" value="Genomic_DNA"/>
</dbReference>
<dbReference type="SMR" id="B5XSY9"/>
<dbReference type="KEGG" id="kpe:KPK_0562"/>
<dbReference type="HOGENOM" id="CLU_105087_3_0_6"/>
<dbReference type="BioCyc" id="KPNE507522:GI0B-561-MONOMER"/>
<dbReference type="Proteomes" id="UP000001734">
    <property type="component" value="Chromosome"/>
</dbReference>
<dbReference type="Gene3D" id="2.30.110.10">
    <property type="entry name" value="Electron Transport, Fmn-binding Protein, Chain A"/>
    <property type="match status" value="1"/>
</dbReference>
<dbReference type="HAMAP" id="MF_00764">
    <property type="entry name" value="UPF0306"/>
    <property type="match status" value="1"/>
</dbReference>
<dbReference type="InterPro" id="IPR012349">
    <property type="entry name" value="Split_barrel_FMN-bd"/>
</dbReference>
<dbReference type="InterPro" id="IPR011194">
    <property type="entry name" value="UPF0306"/>
</dbReference>
<dbReference type="NCBIfam" id="NF002900">
    <property type="entry name" value="PRK03467.1"/>
    <property type="match status" value="1"/>
</dbReference>
<dbReference type="PIRSF" id="PIRSF009554">
    <property type="entry name" value="UCP009554"/>
    <property type="match status" value="1"/>
</dbReference>
<dbReference type="SUPFAM" id="SSF50475">
    <property type="entry name" value="FMN-binding split barrel"/>
    <property type="match status" value="1"/>
</dbReference>
<evidence type="ECO:0000255" key="1">
    <source>
        <dbReference type="HAMAP-Rule" id="MF_00764"/>
    </source>
</evidence>
<comment type="similarity">
    <text evidence="1">Belongs to the UPF0306 family.</text>
</comment>